<evidence type="ECO:0000255" key="1">
    <source>
        <dbReference type="HAMAP-Rule" id="MF_01177"/>
    </source>
</evidence>
<reference key="1">
    <citation type="journal article" date="2005" name="Nucleic Acids Res.">
        <title>Genome dynamics and diversity of Shigella species, the etiologic agents of bacillary dysentery.</title>
        <authorList>
            <person name="Yang F."/>
            <person name="Yang J."/>
            <person name="Zhang X."/>
            <person name="Chen L."/>
            <person name="Jiang Y."/>
            <person name="Yan Y."/>
            <person name="Tang X."/>
            <person name="Wang J."/>
            <person name="Xiong Z."/>
            <person name="Dong J."/>
            <person name="Xue Y."/>
            <person name="Zhu Y."/>
            <person name="Xu X."/>
            <person name="Sun L."/>
            <person name="Chen S."/>
            <person name="Nie H."/>
            <person name="Peng J."/>
            <person name="Xu J."/>
            <person name="Wang Y."/>
            <person name="Yuan Z."/>
            <person name="Wen Y."/>
            <person name="Yao Z."/>
            <person name="Shen Y."/>
            <person name="Qiang B."/>
            <person name="Hou Y."/>
            <person name="Yu J."/>
            <person name="Jin Q."/>
        </authorList>
    </citation>
    <scope>NUCLEOTIDE SEQUENCE [LARGE SCALE GENOMIC DNA]</scope>
    <source>
        <strain>Sd197</strain>
    </source>
</reference>
<keyword id="KW-0001">2Fe-2S</keyword>
<keyword id="KW-0238">DNA-binding</keyword>
<keyword id="KW-0408">Iron</keyword>
<keyword id="KW-0411">Iron-sulfur</keyword>
<keyword id="KW-0479">Metal-binding</keyword>
<keyword id="KW-1185">Reference proteome</keyword>
<keyword id="KW-0678">Repressor</keyword>
<keyword id="KW-0804">Transcription</keyword>
<keyword id="KW-0805">Transcription regulation</keyword>
<protein>
    <recommendedName>
        <fullName evidence="1">HTH-type transcriptional repressor NsrR</fullName>
    </recommendedName>
</protein>
<feature type="chain" id="PRO_0000268949" description="HTH-type transcriptional repressor NsrR">
    <location>
        <begin position="1"/>
        <end position="141"/>
    </location>
</feature>
<feature type="domain" description="HTH rrf2-type" evidence="1">
    <location>
        <begin position="2"/>
        <end position="129"/>
    </location>
</feature>
<feature type="DNA-binding region" description="H-T-H motif" evidence="1">
    <location>
        <begin position="28"/>
        <end position="51"/>
    </location>
</feature>
<feature type="binding site" evidence="1">
    <location>
        <position position="91"/>
    </location>
    <ligand>
        <name>[2Fe-2S] cluster</name>
        <dbReference type="ChEBI" id="CHEBI:190135"/>
    </ligand>
</feature>
<feature type="binding site" evidence="1">
    <location>
        <position position="96"/>
    </location>
    <ligand>
        <name>[2Fe-2S] cluster</name>
        <dbReference type="ChEBI" id="CHEBI:190135"/>
    </ligand>
</feature>
<feature type="binding site" evidence="1">
    <location>
        <position position="102"/>
    </location>
    <ligand>
        <name>[2Fe-2S] cluster</name>
        <dbReference type="ChEBI" id="CHEBI:190135"/>
    </ligand>
</feature>
<accession>Q328F7</accession>
<dbReference type="EMBL" id="CP000034">
    <property type="protein sequence ID" value="ABB64298.1"/>
    <property type="molecule type" value="Genomic_DNA"/>
</dbReference>
<dbReference type="RefSeq" id="WP_001177639.1">
    <property type="nucleotide sequence ID" value="NC_007606.1"/>
</dbReference>
<dbReference type="RefSeq" id="YP_405789.1">
    <property type="nucleotide sequence ID" value="NC_007606.1"/>
</dbReference>
<dbReference type="SMR" id="Q328F7"/>
<dbReference type="STRING" id="300267.SDY_4411"/>
<dbReference type="EnsemblBacteria" id="ABB64298">
    <property type="protein sequence ID" value="ABB64298"/>
    <property type="gene ID" value="SDY_4411"/>
</dbReference>
<dbReference type="GeneID" id="93777643"/>
<dbReference type="KEGG" id="sdy:SDY_4411"/>
<dbReference type="PATRIC" id="fig|300267.13.peg.5209"/>
<dbReference type="HOGENOM" id="CLU_107144_2_1_6"/>
<dbReference type="Proteomes" id="UP000002716">
    <property type="component" value="Chromosome"/>
</dbReference>
<dbReference type="GO" id="GO:0005829">
    <property type="term" value="C:cytosol"/>
    <property type="evidence" value="ECO:0007669"/>
    <property type="project" value="TreeGrafter"/>
</dbReference>
<dbReference type="GO" id="GO:0051537">
    <property type="term" value="F:2 iron, 2 sulfur cluster binding"/>
    <property type="evidence" value="ECO:0007669"/>
    <property type="project" value="UniProtKB-KW"/>
</dbReference>
<dbReference type="GO" id="GO:0003700">
    <property type="term" value="F:DNA-binding transcription factor activity"/>
    <property type="evidence" value="ECO:0007669"/>
    <property type="project" value="UniProtKB-UniRule"/>
</dbReference>
<dbReference type="GO" id="GO:0003690">
    <property type="term" value="F:double-stranded DNA binding"/>
    <property type="evidence" value="ECO:0007669"/>
    <property type="project" value="UniProtKB-UniRule"/>
</dbReference>
<dbReference type="GO" id="GO:0005506">
    <property type="term" value="F:iron ion binding"/>
    <property type="evidence" value="ECO:0007669"/>
    <property type="project" value="UniProtKB-UniRule"/>
</dbReference>
<dbReference type="GO" id="GO:0045892">
    <property type="term" value="P:negative regulation of DNA-templated transcription"/>
    <property type="evidence" value="ECO:0007669"/>
    <property type="project" value="InterPro"/>
</dbReference>
<dbReference type="FunFam" id="1.10.10.10:FF:000105">
    <property type="entry name" value="HTH-type transcriptional repressor NsrR"/>
    <property type="match status" value="1"/>
</dbReference>
<dbReference type="Gene3D" id="1.10.10.10">
    <property type="entry name" value="Winged helix-like DNA-binding domain superfamily/Winged helix DNA-binding domain"/>
    <property type="match status" value="1"/>
</dbReference>
<dbReference type="HAMAP" id="MF_01177">
    <property type="entry name" value="HTH_type_NsrR"/>
    <property type="match status" value="1"/>
</dbReference>
<dbReference type="InterPro" id="IPR030489">
    <property type="entry name" value="TR_Rrf2-type_CS"/>
</dbReference>
<dbReference type="InterPro" id="IPR000944">
    <property type="entry name" value="Tscrpt_reg_Rrf2"/>
</dbReference>
<dbReference type="InterPro" id="IPR023761">
    <property type="entry name" value="Tscrpt_rep_HTH_NsrR"/>
</dbReference>
<dbReference type="InterPro" id="IPR036388">
    <property type="entry name" value="WH-like_DNA-bd_sf"/>
</dbReference>
<dbReference type="InterPro" id="IPR036390">
    <property type="entry name" value="WH_DNA-bd_sf"/>
</dbReference>
<dbReference type="NCBIfam" id="NF008240">
    <property type="entry name" value="PRK11014.1"/>
    <property type="match status" value="1"/>
</dbReference>
<dbReference type="NCBIfam" id="TIGR00738">
    <property type="entry name" value="rrf2_super"/>
    <property type="match status" value="1"/>
</dbReference>
<dbReference type="PANTHER" id="PTHR33221:SF4">
    <property type="entry name" value="HTH-TYPE TRANSCRIPTIONAL REPRESSOR NSRR"/>
    <property type="match status" value="1"/>
</dbReference>
<dbReference type="PANTHER" id="PTHR33221">
    <property type="entry name" value="WINGED HELIX-TURN-HELIX TRANSCRIPTIONAL REGULATOR, RRF2 FAMILY"/>
    <property type="match status" value="1"/>
</dbReference>
<dbReference type="Pfam" id="PF02082">
    <property type="entry name" value="Rrf2"/>
    <property type="match status" value="1"/>
</dbReference>
<dbReference type="SUPFAM" id="SSF46785">
    <property type="entry name" value="Winged helix' DNA-binding domain"/>
    <property type="match status" value="1"/>
</dbReference>
<dbReference type="PROSITE" id="PS01332">
    <property type="entry name" value="HTH_RRF2_1"/>
    <property type="match status" value="1"/>
</dbReference>
<dbReference type="PROSITE" id="PS51197">
    <property type="entry name" value="HTH_RRF2_2"/>
    <property type="match status" value="1"/>
</dbReference>
<name>NSRR_SHIDS</name>
<sequence length="141" mass="15593">MQLTSFTDYGLRALIYMASLPEGRMTSISEVTDVYGVSRNHMVKIINQLSRAGYVTAVRGKNGGIRLGKPASAIRIGDVVRELEPLSLVNCSSEFCHITPACRLKQALSKAVQSFLTELDNYTLADLVEENQPLYKLLLVE</sequence>
<organism>
    <name type="scientific">Shigella dysenteriae serotype 1 (strain Sd197)</name>
    <dbReference type="NCBI Taxonomy" id="300267"/>
    <lineage>
        <taxon>Bacteria</taxon>
        <taxon>Pseudomonadati</taxon>
        <taxon>Pseudomonadota</taxon>
        <taxon>Gammaproteobacteria</taxon>
        <taxon>Enterobacterales</taxon>
        <taxon>Enterobacteriaceae</taxon>
        <taxon>Shigella</taxon>
    </lineage>
</organism>
<gene>
    <name evidence="1" type="primary">nsrR</name>
    <name type="ordered locus">SDY_4411</name>
</gene>
<proteinExistence type="inferred from homology"/>
<comment type="function">
    <text evidence="1">Nitric oxide-sensitive repressor of genes involved in protecting the cell against nitrosative stress. May require iron for activity.</text>
</comment>
<comment type="cofactor">
    <cofactor evidence="1">
        <name>[2Fe-2S] cluster</name>
        <dbReference type="ChEBI" id="CHEBI:190135"/>
    </cofactor>
    <text evidence="1">Binds 1 [2Fe-2S] cluster per subunit.</text>
</comment>